<reference key="1">
    <citation type="journal article" date="1998" name="Biochem. Biophys. Res. Commun.">
        <title>Molecular cloning of a novel RING finger-B box-coiled coil (RBCC) protein, terf, expressed in the testis.</title>
        <authorList>
            <person name="Ogawa S."/>
            <person name="Goto W."/>
            <person name="Orimo A."/>
            <person name="Hosoi T."/>
            <person name="Ouchi Y."/>
            <person name="Muramatsu M."/>
            <person name="Inoue S."/>
        </authorList>
    </citation>
    <scope>NUCLEOTIDE SEQUENCE [MRNA]</scope>
    <source>
        <tissue>Testis</tissue>
    </source>
</reference>
<reference key="2">
    <citation type="journal article" date="2004" name="Genome Res.">
        <title>The status, quality, and expansion of the NIH full-length cDNA project: the Mammalian Gene Collection (MGC).</title>
        <authorList>
            <consortium name="The MGC Project Team"/>
        </authorList>
    </citation>
    <scope>NUCLEOTIDE SEQUENCE [LARGE SCALE MRNA]</scope>
    <source>
        <tissue>Testis</tissue>
    </source>
</reference>
<sequence length="477" mass="54954">MDAVELARRLQEEATCSICLDYFTDPVMTACGHNFCRECIQMSWEKGKGKKGKKKQKGSFPCPECREMSPQRNLRPNRLLTKVAEMARQHPGLHKRDLCQIHQEPLKLFCQDDQTPICVVCREAQEHRMHRVLPLDEAAREYKLRLEEDIKYLREEMMKTETLQAKEEQTLTEWQERVKERRERILEEFQKVVLFLVEEERRLLQILKKEEDDTLGKLQDSKASLDHQSRSLDLILLQLEEQTQQEPLQMLQDVKDTLTRKESLSMQYPEVVLPVAIKTVCRVPGQIEVLKSFQEDVVPDPSTAYPYLLLYESRQRRYLSPPPEGSAPYSKDRFLAYPCAVGQKSFSSGRHYWEVGMNLTGDALWALGVCRDNVSRKDRVLKSPENGFWVVQLSKGKKHLPLLPNSIPVTLTEPPSHMGIFLDFQAGEVSFYSVNDGSHLHSFSQVAFPGPLLPFFCLGSPKSGQMVISTVTMWVKG</sequence>
<organism>
    <name type="scientific">Rattus norvegicus</name>
    <name type="common">Rat</name>
    <dbReference type="NCBI Taxonomy" id="10116"/>
    <lineage>
        <taxon>Eukaryota</taxon>
        <taxon>Metazoa</taxon>
        <taxon>Chordata</taxon>
        <taxon>Craniata</taxon>
        <taxon>Vertebrata</taxon>
        <taxon>Euteleostomi</taxon>
        <taxon>Mammalia</taxon>
        <taxon>Eutheria</taxon>
        <taxon>Euarchontoglires</taxon>
        <taxon>Glires</taxon>
        <taxon>Rodentia</taxon>
        <taxon>Myomorpha</taxon>
        <taxon>Muroidea</taxon>
        <taxon>Muridae</taxon>
        <taxon>Murinae</taxon>
        <taxon>Rattus</taxon>
    </lineage>
</organism>
<protein>
    <recommendedName>
        <fullName>E3 ubiquitin-protein ligase TRIM17</fullName>
        <ecNumber>2.3.2.27</ecNumber>
    </recommendedName>
    <alternativeName>
        <fullName evidence="7">RING-type E3 ubiquitin transferase TRIM17</fullName>
    </alternativeName>
    <alternativeName>
        <fullName>Testis RING finger protein</fullName>
    </alternativeName>
    <alternativeName>
        <fullName>Tripartite motif-containing protein 17</fullName>
    </alternativeName>
</protein>
<comment type="function">
    <text evidence="1 2">E3 ubiquitin ligase that plays important roles in the regulation of neuronal apoptosis, selective autophagy or cell proliferation. Stimulates the degradation of kinetochore ZW10 interacting protein ZWINT in a proteasome-dependent manner, leading to negative regulation of cell proliferation. Inhibits autophagic degradation of diverse known targets while contributing to autophagy of midbodies. Autophagy-inhibitory activity involves MCL1, which TRIM17 assembles into complexes with the key autophagy regulator BECN1 (By similarity). Controls neuronal apoptosis by mediating ubiquitination and degradation of MCL1 to initiate neuronal death. In addition, regulates NFAT transcription factors NFATC3 and NFATC4 activities by preventing their nuclear localization, thus inhibiting their transcriptional activities. Decreases TRIM41-mediated degradation of ZSCAN2 thereby stimulating alpha-synuclein/SNCA transcription in neuronal cells (By similarity). Prevents the E3 ubiquitin-ligase activity of TRIM28 and its interaction with anti-apoptotic BCL2A1, blocking TRIM28 from ubiquitinating BCL2A1 (By similarity).</text>
</comment>
<comment type="catalytic activity">
    <reaction>
        <text>S-ubiquitinyl-[E2 ubiquitin-conjugating enzyme]-L-cysteine + [acceptor protein]-L-lysine = [E2 ubiquitin-conjugating enzyme]-L-cysteine + N(6)-ubiquitinyl-[acceptor protein]-L-lysine.</text>
        <dbReference type="EC" id="2.3.2.27"/>
    </reaction>
</comment>
<comment type="pathway">
    <text>Protein modification; protein ubiquitination.</text>
</comment>
<comment type="subunit">
    <text evidence="1 2">Interacts (via coiled coil) with TRIM44 (via coiled coil). Interacts with TRIM28; this interaction prevents TRIM28 activity on BCL2A1 (By similarity). Interacts with TRIM41; this interaction prevents TRIM41 activity on ZSCAN2 (By similarity). Interacts with BECN1 (By similarity). Interacts with NFATC3 and NFATC4; these interactions prevent NFATC3 and NFATC4 nuclear localization (By similarity).</text>
</comment>
<comment type="subcellular location">
    <subcellularLocation>
        <location evidence="2">Cytoplasm</location>
    </subcellularLocation>
    <subcellularLocation>
        <location evidence="2">Lysosome</location>
    </subcellularLocation>
</comment>
<comment type="tissue specificity">
    <text>Expressed almost exclusively in the testis.</text>
</comment>
<comment type="PTM">
    <text evidence="2">Auto-ubiquitinated.</text>
</comment>
<comment type="similarity">
    <text evidence="7">Belongs to the TRIM/RBCC family.</text>
</comment>
<feature type="chain" id="PRO_0000056226" description="E3 ubiquitin-protein ligase TRIM17">
    <location>
        <begin position="1"/>
        <end position="477"/>
    </location>
</feature>
<feature type="domain" description="B30.2/SPRY" evidence="6">
    <location>
        <begin position="276"/>
        <end position="475"/>
    </location>
</feature>
<feature type="zinc finger region" description="RING-type" evidence="5">
    <location>
        <begin position="16"/>
        <end position="66"/>
    </location>
</feature>
<feature type="zinc finger region" description="B box-type" evidence="4">
    <location>
        <begin position="94"/>
        <end position="135"/>
    </location>
</feature>
<feature type="coiled-coil region" evidence="3">
    <location>
        <begin position="135"/>
        <end position="225"/>
    </location>
</feature>
<feature type="binding site" evidence="4">
    <location>
        <position position="99"/>
    </location>
    <ligand>
        <name>Zn(2+)</name>
        <dbReference type="ChEBI" id="CHEBI:29105"/>
    </ligand>
</feature>
<feature type="binding site" evidence="4">
    <location>
        <position position="102"/>
    </location>
    <ligand>
        <name>Zn(2+)</name>
        <dbReference type="ChEBI" id="CHEBI:29105"/>
    </ligand>
</feature>
<feature type="binding site" evidence="4">
    <location>
        <position position="121"/>
    </location>
    <ligand>
        <name>Zn(2+)</name>
        <dbReference type="ChEBI" id="CHEBI:29105"/>
    </ligand>
</feature>
<feature type="binding site" evidence="4">
    <location>
        <position position="127"/>
    </location>
    <ligand>
        <name>Zn(2+)</name>
        <dbReference type="ChEBI" id="CHEBI:29105"/>
    </ligand>
</feature>
<gene>
    <name type="primary">Trim17</name>
    <name type="synonym">Terf</name>
</gene>
<accession>Q9WV59</accession>
<evidence type="ECO:0000250" key="1">
    <source>
        <dbReference type="UniProtKB" id="Q7TPM3"/>
    </source>
</evidence>
<evidence type="ECO:0000250" key="2">
    <source>
        <dbReference type="UniProtKB" id="Q9Y577"/>
    </source>
</evidence>
<evidence type="ECO:0000255" key="3"/>
<evidence type="ECO:0000255" key="4">
    <source>
        <dbReference type="PROSITE-ProRule" id="PRU00024"/>
    </source>
</evidence>
<evidence type="ECO:0000255" key="5">
    <source>
        <dbReference type="PROSITE-ProRule" id="PRU00175"/>
    </source>
</evidence>
<evidence type="ECO:0000255" key="6">
    <source>
        <dbReference type="PROSITE-ProRule" id="PRU00548"/>
    </source>
</evidence>
<evidence type="ECO:0000305" key="7"/>
<proteinExistence type="evidence at transcript level"/>
<keyword id="KW-0175">Coiled coil</keyword>
<keyword id="KW-0963">Cytoplasm</keyword>
<keyword id="KW-0458">Lysosome</keyword>
<keyword id="KW-0479">Metal-binding</keyword>
<keyword id="KW-1185">Reference proteome</keyword>
<keyword id="KW-0808">Transferase</keyword>
<keyword id="KW-0832">Ubl conjugation</keyword>
<keyword id="KW-0833">Ubl conjugation pathway</keyword>
<keyword id="KW-0862">Zinc</keyword>
<keyword id="KW-0863">Zinc-finger</keyword>
<name>TRI17_RAT</name>
<dbReference type="EC" id="2.3.2.27"/>
<dbReference type="EMBL" id="AF156272">
    <property type="protein sequence ID" value="AAD40287.1"/>
    <property type="molecule type" value="mRNA"/>
</dbReference>
<dbReference type="EMBL" id="BC078819">
    <property type="protein sequence ID" value="AAH78819.1"/>
    <property type="molecule type" value="mRNA"/>
</dbReference>
<dbReference type="PIR" id="JE0343">
    <property type="entry name" value="JE0343"/>
</dbReference>
<dbReference type="RefSeq" id="NP_073635.1">
    <property type="nucleotide sequence ID" value="NM_022798.2"/>
</dbReference>
<dbReference type="SMR" id="Q9WV59"/>
<dbReference type="FunCoup" id="Q9WV59">
    <property type="interactions" value="8"/>
</dbReference>
<dbReference type="STRING" id="10116.ENSRNOP00000060549"/>
<dbReference type="PhosphoSitePlus" id="Q9WV59"/>
<dbReference type="PaxDb" id="10116-ENSRNOP00000003885"/>
<dbReference type="Ensembl" id="ENSRNOT00000003885.6">
    <property type="protein sequence ID" value="ENSRNOP00000003885.3"/>
    <property type="gene ID" value="ENSRNOG00000022983.6"/>
</dbReference>
<dbReference type="GeneID" id="64702"/>
<dbReference type="KEGG" id="rno:64702"/>
<dbReference type="UCSC" id="RGD:69290">
    <property type="organism name" value="rat"/>
</dbReference>
<dbReference type="AGR" id="RGD:69290"/>
<dbReference type="CTD" id="51127"/>
<dbReference type="RGD" id="69290">
    <property type="gene designation" value="Trim17"/>
</dbReference>
<dbReference type="eggNOG" id="KOG2177">
    <property type="taxonomic scope" value="Eukaryota"/>
</dbReference>
<dbReference type="GeneTree" id="ENSGT00940000162155"/>
<dbReference type="HOGENOM" id="CLU_013137_0_3_1"/>
<dbReference type="InParanoid" id="Q9WV59"/>
<dbReference type="OMA" id="YPCVVGQ"/>
<dbReference type="OrthoDB" id="654191at2759"/>
<dbReference type="PhylomeDB" id="Q9WV59"/>
<dbReference type="TreeFam" id="TF338674"/>
<dbReference type="UniPathway" id="UPA00143"/>
<dbReference type="PRO" id="PR:Q9WV59"/>
<dbReference type="Proteomes" id="UP000002494">
    <property type="component" value="Chromosome 10"/>
</dbReference>
<dbReference type="Bgee" id="ENSRNOG00000022983">
    <property type="expression patterns" value="Expressed in testis and 19 other cell types or tissues"/>
</dbReference>
<dbReference type="ExpressionAtlas" id="Q9WV59">
    <property type="expression patterns" value="baseline and differential"/>
</dbReference>
<dbReference type="GO" id="GO:0005737">
    <property type="term" value="C:cytoplasm"/>
    <property type="evidence" value="ECO:0000318"/>
    <property type="project" value="GO_Central"/>
</dbReference>
<dbReference type="GO" id="GO:0005764">
    <property type="term" value="C:lysosome"/>
    <property type="evidence" value="ECO:0007669"/>
    <property type="project" value="UniProtKB-SubCell"/>
</dbReference>
<dbReference type="GO" id="GO:0030674">
    <property type="term" value="F:protein-macromolecule adaptor activity"/>
    <property type="evidence" value="ECO:0000266"/>
    <property type="project" value="RGD"/>
</dbReference>
<dbReference type="GO" id="GO:0061630">
    <property type="term" value="F:ubiquitin protein ligase activity"/>
    <property type="evidence" value="ECO:0000318"/>
    <property type="project" value="GO_Central"/>
</dbReference>
<dbReference type="GO" id="GO:0004842">
    <property type="term" value="F:ubiquitin-protein transferase activity"/>
    <property type="evidence" value="ECO:0000250"/>
    <property type="project" value="UniProtKB"/>
</dbReference>
<dbReference type="GO" id="GO:0008270">
    <property type="term" value="F:zinc ion binding"/>
    <property type="evidence" value="ECO:0007669"/>
    <property type="project" value="UniProtKB-KW"/>
</dbReference>
<dbReference type="GO" id="GO:0006914">
    <property type="term" value="P:autophagy"/>
    <property type="evidence" value="ECO:0000266"/>
    <property type="project" value="RGD"/>
</dbReference>
<dbReference type="GO" id="GO:0045087">
    <property type="term" value="P:innate immune response"/>
    <property type="evidence" value="ECO:0000318"/>
    <property type="project" value="GO_Central"/>
</dbReference>
<dbReference type="GO" id="GO:0051865">
    <property type="term" value="P:protein autoubiquitination"/>
    <property type="evidence" value="ECO:0000266"/>
    <property type="project" value="RGD"/>
</dbReference>
<dbReference type="GO" id="GO:0010468">
    <property type="term" value="P:regulation of gene expression"/>
    <property type="evidence" value="ECO:0000318"/>
    <property type="project" value="GO_Central"/>
</dbReference>
<dbReference type="GO" id="GO:0032880">
    <property type="term" value="P:regulation of protein localization"/>
    <property type="evidence" value="ECO:0000266"/>
    <property type="project" value="RGD"/>
</dbReference>
<dbReference type="CDD" id="cd19762">
    <property type="entry name" value="Bbox2_TRIM7-like"/>
    <property type="match status" value="1"/>
</dbReference>
<dbReference type="CDD" id="cd16595">
    <property type="entry name" value="RING-HC_TRIM17_C-IV"/>
    <property type="match status" value="1"/>
</dbReference>
<dbReference type="CDD" id="cd15812">
    <property type="entry name" value="SPRY_PRY_TRIM17"/>
    <property type="match status" value="1"/>
</dbReference>
<dbReference type="FunFam" id="3.30.40.10:FF:000232">
    <property type="entry name" value="E3 ubiquitin-protein ligase TRIM11"/>
    <property type="match status" value="1"/>
</dbReference>
<dbReference type="FunFam" id="2.60.120.920:FF:000057">
    <property type="entry name" value="E3 ubiquitin-protein ligase TRIM17"/>
    <property type="match status" value="1"/>
</dbReference>
<dbReference type="Gene3D" id="2.60.120.920">
    <property type="match status" value="1"/>
</dbReference>
<dbReference type="Gene3D" id="3.30.160.60">
    <property type="entry name" value="Classic Zinc Finger"/>
    <property type="match status" value="1"/>
</dbReference>
<dbReference type="Gene3D" id="3.30.40.10">
    <property type="entry name" value="Zinc/RING finger domain, C3HC4 (zinc finger)"/>
    <property type="match status" value="1"/>
</dbReference>
<dbReference type="InterPro" id="IPR001870">
    <property type="entry name" value="B30.2/SPRY"/>
</dbReference>
<dbReference type="InterPro" id="IPR043136">
    <property type="entry name" value="B30.2/SPRY_sf"/>
</dbReference>
<dbReference type="InterPro" id="IPR003879">
    <property type="entry name" value="Butyrophylin_SPRY"/>
</dbReference>
<dbReference type="InterPro" id="IPR013320">
    <property type="entry name" value="ConA-like_dom_sf"/>
</dbReference>
<dbReference type="InterPro" id="IPR006574">
    <property type="entry name" value="PRY"/>
</dbReference>
<dbReference type="InterPro" id="IPR003877">
    <property type="entry name" value="SPRY_dom"/>
</dbReference>
<dbReference type="InterPro" id="IPR050143">
    <property type="entry name" value="TRIM/RBCC"/>
</dbReference>
<dbReference type="InterPro" id="IPR035687">
    <property type="entry name" value="TRIM17_PRY/SPRY"/>
</dbReference>
<dbReference type="InterPro" id="IPR027370">
    <property type="entry name" value="Znf-RING_euk"/>
</dbReference>
<dbReference type="InterPro" id="IPR000315">
    <property type="entry name" value="Znf_B-box"/>
</dbReference>
<dbReference type="InterPro" id="IPR001841">
    <property type="entry name" value="Znf_RING"/>
</dbReference>
<dbReference type="InterPro" id="IPR013083">
    <property type="entry name" value="Znf_RING/FYVE/PHD"/>
</dbReference>
<dbReference type="InterPro" id="IPR017907">
    <property type="entry name" value="Znf_RING_CS"/>
</dbReference>
<dbReference type="PANTHER" id="PTHR24103">
    <property type="entry name" value="E3 UBIQUITIN-PROTEIN LIGASE TRIM"/>
    <property type="match status" value="1"/>
</dbReference>
<dbReference type="Pfam" id="PF00622">
    <property type="entry name" value="SPRY"/>
    <property type="match status" value="1"/>
</dbReference>
<dbReference type="Pfam" id="PF00643">
    <property type="entry name" value="zf-B_box"/>
    <property type="match status" value="1"/>
</dbReference>
<dbReference type="Pfam" id="PF13445">
    <property type="entry name" value="zf-RING_UBOX"/>
    <property type="match status" value="1"/>
</dbReference>
<dbReference type="PRINTS" id="PR01407">
    <property type="entry name" value="BUTYPHLNCDUF"/>
</dbReference>
<dbReference type="SMART" id="SM00336">
    <property type="entry name" value="BBOX"/>
    <property type="match status" value="1"/>
</dbReference>
<dbReference type="SMART" id="SM00589">
    <property type="entry name" value="PRY"/>
    <property type="match status" value="1"/>
</dbReference>
<dbReference type="SMART" id="SM00184">
    <property type="entry name" value="RING"/>
    <property type="match status" value="1"/>
</dbReference>
<dbReference type="SMART" id="SM00449">
    <property type="entry name" value="SPRY"/>
    <property type="match status" value="1"/>
</dbReference>
<dbReference type="SUPFAM" id="SSF57845">
    <property type="entry name" value="B-box zinc-binding domain"/>
    <property type="match status" value="1"/>
</dbReference>
<dbReference type="SUPFAM" id="SSF49899">
    <property type="entry name" value="Concanavalin A-like lectins/glucanases"/>
    <property type="match status" value="1"/>
</dbReference>
<dbReference type="SUPFAM" id="SSF57850">
    <property type="entry name" value="RING/U-box"/>
    <property type="match status" value="1"/>
</dbReference>
<dbReference type="PROSITE" id="PS50188">
    <property type="entry name" value="B302_SPRY"/>
    <property type="match status" value="1"/>
</dbReference>
<dbReference type="PROSITE" id="PS50119">
    <property type="entry name" value="ZF_BBOX"/>
    <property type="match status" value="1"/>
</dbReference>
<dbReference type="PROSITE" id="PS00518">
    <property type="entry name" value="ZF_RING_1"/>
    <property type="match status" value="1"/>
</dbReference>
<dbReference type="PROSITE" id="PS50089">
    <property type="entry name" value="ZF_RING_2"/>
    <property type="match status" value="1"/>
</dbReference>